<dbReference type="EMBL" id="Y18930">
    <property type="protein sequence ID" value="CAB57567.1"/>
    <property type="molecule type" value="Genomic_DNA"/>
</dbReference>
<dbReference type="EMBL" id="AE006641">
    <property type="protein sequence ID" value="AAK41032.1"/>
    <property type="molecule type" value="Genomic_DNA"/>
</dbReference>
<dbReference type="PIR" id="A99222">
    <property type="entry name" value="A99222"/>
</dbReference>
<dbReference type="PDB" id="2JE6">
    <property type="method" value="X-ray"/>
    <property type="resolution" value="1.60 A"/>
    <property type="chains" value="I=1-249"/>
</dbReference>
<dbReference type="PDB" id="2JEA">
    <property type="method" value="X-ray"/>
    <property type="resolution" value="2.33 A"/>
    <property type="chains" value="I=1-249"/>
</dbReference>
<dbReference type="PDB" id="2JEB">
    <property type="method" value="X-ray"/>
    <property type="resolution" value="2.40 A"/>
    <property type="chains" value="I=1-249"/>
</dbReference>
<dbReference type="PDB" id="3L7Z">
    <property type="method" value="X-ray"/>
    <property type="resolution" value="2.41 A"/>
    <property type="chains" value="C/F/I=1-249"/>
</dbReference>
<dbReference type="PDB" id="4BA1">
    <property type="method" value="X-ray"/>
    <property type="resolution" value="1.80 A"/>
    <property type="chains" value="I=1-249"/>
</dbReference>
<dbReference type="PDB" id="4BA2">
    <property type="method" value="X-ray"/>
    <property type="resolution" value="2.50 A"/>
    <property type="chains" value="I=1-249"/>
</dbReference>
<dbReference type="PDBsum" id="2JE6"/>
<dbReference type="PDBsum" id="2JEA"/>
<dbReference type="PDBsum" id="2JEB"/>
<dbReference type="PDBsum" id="3L7Z"/>
<dbReference type="PDBsum" id="4BA1"/>
<dbReference type="PDBsum" id="4BA2"/>
<dbReference type="SMR" id="Q9UXC4"/>
<dbReference type="FunCoup" id="Q9UXC4">
    <property type="interactions" value="159"/>
</dbReference>
<dbReference type="STRING" id="273057.SSO0736"/>
<dbReference type="PaxDb" id="273057-SSO0736"/>
<dbReference type="EnsemblBacteria" id="AAK41032">
    <property type="protein sequence ID" value="AAK41032"/>
    <property type="gene ID" value="SSO0736"/>
</dbReference>
<dbReference type="KEGG" id="sso:SSO0736"/>
<dbReference type="PATRIC" id="fig|273057.12.peg.732"/>
<dbReference type="eggNOG" id="arCOG00678">
    <property type="taxonomic scope" value="Archaea"/>
</dbReference>
<dbReference type="HOGENOM" id="CLU_071769_0_0_2"/>
<dbReference type="InParanoid" id="Q9UXC4"/>
<dbReference type="PhylomeDB" id="Q9UXC4"/>
<dbReference type="EvolutionaryTrace" id="Q9UXC4"/>
<dbReference type="Proteomes" id="UP000001974">
    <property type="component" value="Chromosome"/>
</dbReference>
<dbReference type="GO" id="GO:0005737">
    <property type="term" value="C:cytoplasm"/>
    <property type="evidence" value="ECO:0007669"/>
    <property type="project" value="UniProtKB-SubCell"/>
</dbReference>
<dbReference type="GO" id="GO:0000178">
    <property type="term" value="C:exosome (RNase complex)"/>
    <property type="evidence" value="ECO:0000318"/>
    <property type="project" value="GO_Central"/>
</dbReference>
<dbReference type="GO" id="GO:0008143">
    <property type="term" value="F:poly(A) binding"/>
    <property type="evidence" value="ECO:0007669"/>
    <property type="project" value="InterPro"/>
</dbReference>
<dbReference type="GO" id="GO:0003723">
    <property type="term" value="F:RNA binding"/>
    <property type="evidence" value="ECO:0000318"/>
    <property type="project" value="GO_Central"/>
</dbReference>
<dbReference type="GO" id="GO:0071034">
    <property type="term" value="P:CUT catabolic process"/>
    <property type="evidence" value="ECO:0000318"/>
    <property type="project" value="GO_Central"/>
</dbReference>
<dbReference type="GO" id="GO:0000467">
    <property type="term" value="P:exonucleolytic trimming to generate mature 3'-end of 5.8S rRNA from tricistronic rRNA transcript (SSU-rRNA, 5.8S rRNA, LSU-rRNA)"/>
    <property type="evidence" value="ECO:0000318"/>
    <property type="project" value="GO_Central"/>
</dbReference>
<dbReference type="GO" id="GO:0071051">
    <property type="term" value="P:poly(A)-dependent snoRNA 3'-end processing"/>
    <property type="evidence" value="ECO:0000318"/>
    <property type="project" value="GO_Central"/>
</dbReference>
<dbReference type="GO" id="GO:0006401">
    <property type="term" value="P:RNA catabolic process"/>
    <property type="evidence" value="ECO:0007669"/>
    <property type="project" value="UniProtKB-UniRule"/>
</dbReference>
<dbReference type="GO" id="GO:0034475">
    <property type="term" value="P:U4 snRNA 3'-end processing"/>
    <property type="evidence" value="ECO:0000318"/>
    <property type="project" value="GO_Central"/>
</dbReference>
<dbReference type="CDD" id="cd22524">
    <property type="entry name" value="KH-I_Rrp4_prokar"/>
    <property type="match status" value="1"/>
</dbReference>
<dbReference type="CDD" id="cd05789">
    <property type="entry name" value="S1_Rrp4"/>
    <property type="match status" value="1"/>
</dbReference>
<dbReference type="FunFam" id="3.30.1370.10:FF:000095">
    <property type="entry name" value="Exosome complex component Rrp4"/>
    <property type="match status" value="1"/>
</dbReference>
<dbReference type="Gene3D" id="2.40.50.100">
    <property type="match status" value="1"/>
</dbReference>
<dbReference type="Gene3D" id="3.30.1370.10">
    <property type="entry name" value="K Homology domain, type 1"/>
    <property type="match status" value="1"/>
</dbReference>
<dbReference type="Gene3D" id="2.40.50.140">
    <property type="entry name" value="Nucleic acid-binding proteins"/>
    <property type="match status" value="1"/>
</dbReference>
<dbReference type="HAMAP" id="MF_00623">
    <property type="entry name" value="Exosome_Rrp4"/>
    <property type="match status" value="1"/>
</dbReference>
<dbReference type="InterPro" id="IPR026699">
    <property type="entry name" value="Exosome_RNA_bind1/RRP40/RRP4"/>
</dbReference>
<dbReference type="InterPro" id="IPR004088">
    <property type="entry name" value="KH_dom_type_1"/>
</dbReference>
<dbReference type="InterPro" id="IPR036612">
    <property type="entry name" value="KH_dom_type_1_sf"/>
</dbReference>
<dbReference type="InterPro" id="IPR012340">
    <property type="entry name" value="NA-bd_OB-fold"/>
</dbReference>
<dbReference type="InterPro" id="IPR023474">
    <property type="entry name" value="Rrp4"/>
</dbReference>
<dbReference type="InterPro" id="IPR054371">
    <property type="entry name" value="RRP4_N"/>
</dbReference>
<dbReference type="InterPro" id="IPR048565">
    <property type="entry name" value="RRP4_S1"/>
</dbReference>
<dbReference type="InterPro" id="IPR003029">
    <property type="entry name" value="S1_domain"/>
</dbReference>
<dbReference type="NCBIfam" id="NF003181">
    <property type="entry name" value="PRK04163.1-1"/>
    <property type="match status" value="1"/>
</dbReference>
<dbReference type="PANTHER" id="PTHR21321:SF4">
    <property type="entry name" value="EXOSOME COMPLEX COMPONENT RRP4"/>
    <property type="match status" value="1"/>
</dbReference>
<dbReference type="PANTHER" id="PTHR21321">
    <property type="entry name" value="PNAS-3 RELATED"/>
    <property type="match status" value="1"/>
</dbReference>
<dbReference type="Pfam" id="PF22625">
    <property type="entry name" value="ECR1_N_2"/>
    <property type="match status" value="1"/>
</dbReference>
<dbReference type="Pfam" id="PF15985">
    <property type="entry name" value="KH_6"/>
    <property type="match status" value="1"/>
</dbReference>
<dbReference type="SMART" id="SM00316">
    <property type="entry name" value="S1"/>
    <property type="match status" value="1"/>
</dbReference>
<dbReference type="SUPFAM" id="SSF54791">
    <property type="entry name" value="Eukaryotic type KH-domain (KH-domain type I)"/>
    <property type="match status" value="1"/>
</dbReference>
<dbReference type="SUPFAM" id="SSF50249">
    <property type="entry name" value="Nucleic acid-binding proteins"/>
    <property type="match status" value="1"/>
</dbReference>
<dbReference type="SUPFAM" id="SSF110324">
    <property type="entry name" value="Ribosomal L27 protein-like"/>
    <property type="match status" value="1"/>
</dbReference>
<dbReference type="PROSITE" id="PS50126">
    <property type="entry name" value="S1"/>
    <property type="match status" value="1"/>
</dbReference>
<feature type="chain" id="PRO_0000050156" description="Exosome complex component Rrp4">
    <location>
        <begin position="1"/>
        <end position="249"/>
    </location>
</feature>
<feature type="domain" description="S1 motif" evidence="1">
    <location>
        <begin position="73"/>
        <end position="144"/>
    </location>
</feature>
<feature type="domain" description="KH" evidence="1">
    <location>
        <begin position="154"/>
        <end position="211"/>
    </location>
</feature>
<feature type="strand" evidence="9">
    <location>
        <begin position="8"/>
        <end position="10"/>
    </location>
</feature>
<feature type="strand" evidence="11">
    <location>
        <begin position="15"/>
        <end position="17"/>
    </location>
</feature>
<feature type="strand" evidence="9">
    <location>
        <begin position="22"/>
        <end position="26"/>
    </location>
</feature>
<feature type="strand" evidence="9">
    <location>
        <begin position="36"/>
        <end position="39"/>
    </location>
</feature>
<feature type="strand" evidence="9">
    <location>
        <begin position="42"/>
        <end position="45"/>
    </location>
</feature>
<feature type="strand" evidence="9">
    <location>
        <begin position="47"/>
        <end position="54"/>
    </location>
</feature>
<feature type="strand" evidence="9">
    <location>
        <begin position="57"/>
        <end position="63"/>
    </location>
</feature>
<feature type="strand" evidence="9">
    <location>
        <begin position="75"/>
        <end position="83"/>
    </location>
</feature>
<feature type="strand" evidence="9">
    <location>
        <begin position="85"/>
        <end position="91"/>
    </location>
</feature>
<feature type="strand" evidence="9">
    <location>
        <begin position="93"/>
        <end position="96"/>
    </location>
</feature>
<feature type="strand" evidence="9">
    <location>
        <begin position="98"/>
        <end position="101"/>
    </location>
</feature>
<feature type="helix" evidence="9">
    <location>
        <begin position="102"/>
        <end position="106"/>
    </location>
</feature>
<feature type="strand" evidence="9">
    <location>
        <begin position="117"/>
        <end position="119"/>
    </location>
</feature>
<feature type="strand" evidence="9">
    <location>
        <begin position="125"/>
        <end position="134"/>
    </location>
</feature>
<feature type="strand" evidence="9">
    <location>
        <begin position="137"/>
        <end position="142"/>
    </location>
</feature>
<feature type="strand" evidence="9">
    <location>
        <begin position="156"/>
        <end position="158"/>
    </location>
</feature>
<feature type="helix" evidence="9">
    <location>
        <begin position="161"/>
        <end position="163"/>
    </location>
</feature>
<feature type="helix" evidence="9">
    <location>
        <begin position="164"/>
        <end position="168"/>
    </location>
</feature>
<feature type="helix" evidence="9">
    <location>
        <begin position="170"/>
        <end position="172"/>
    </location>
</feature>
<feature type="helix" evidence="9">
    <location>
        <begin position="173"/>
        <end position="179"/>
    </location>
</feature>
<feature type="strand" evidence="10">
    <location>
        <begin position="187"/>
        <end position="189"/>
    </location>
</feature>
<feature type="strand" evidence="9">
    <location>
        <begin position="192"/>
        <end position="195"/>
    </location>
</feature>
<feature type="turn" evidence="11">
    <location>
        <begin position="201"/>
        <end position="206"/>
    </location>
</feature>
<feature type="helix" evidence="9">
    <location>
        <begin position="208"/>
        <end position="211"/>
    </location>
</feature>
<feature type="turn" evidence="9">
    <location>
        <begin position="212"/>
        <end position="219"/>
    </location>
</feature>
<feature type="turn" evidence="10">
    <location>
        <begin position="224"/>
        <end position="227"/>
    </location>
</feature>
<feature type="helix" evidence="10">
    <location>
        <begin position="232"/>
        <end position="235"/>
    </location>
</feature>
<feature type="turn" evidence="10">
    <location>
        <begin position="236"/>
        <end position="238"/>
    </location>
</feature>
<organism>
    <name type="scientific">Saccharolobus solfataricus (strain ATCC 35092 / DSM 1617 / JCM 11322 / P2)</name>
    <name type="common">Sulfolobus solfataricus</name>
    <dbReference type="NCBI Taxonomy" id="273057"/>
    <lineage>
        <taxon>Archaea</taxon>
        <taxon>Thermoproteota</taxon>
        <taxon>Thermoprotei</taxon>
        <taxon>Sulfolobales</taxon>
        <taxon>Sulfolobaceae</taxon>
        <taxon>Saccharolobus</taxon>
    </lineage>
</organism>
<gene>
    <name evidence="1" type="primary">rrp4</name>
    <name type="ordered locus">SSO0736</name>
    <name type="ORF">C20_026</name>
</gene>
<name>RRP4_SACS2</name>
<evidence type="ECO:0000255" key="1">
    <source>
        <dbReference type="HAMAP-Rule" id="MF_00623"/>
    </source>
</evidence>
<evidence type="ECO:0000269" key="2">
    <source>
    </source>
</evidence>
<evidence type="ECO:0000269" key="3">
    <source>
    </source>
</evidence>
<evidence type="ECO:0000269" key="4">
    <source>
    </source>
</evidence>
<evidence type="ECO:0000269" key="5">
    <source>
    </source>
</evidence>
<evidence type="ECO:0000269" key="6">
    <source>
    </source>
</evidence>
<evidence type="ECO:0000269" key="7">
    <source>
    </source>
</evidence>
<evidence type="ECO:0000269" key="8">
    <source>
    </source>
</evidence>
<evidence type="ECO:0007829" key="9">
    <source>
        <dbReference type="PDB" id="2JE6"/>
    </source>
</evidence>
<evidence type="ECO:0007829" key="10">
    <source>
        <dbReference type="PDB" id="3L7Z"/>
    </source>
</evidence>
<evidence type="ECO:0007829" key="11">
    <source>
        <dbReference type="PDB" id="4BA1"/>
    </source>
</evidence>
<comment type="function">
    <text evidence="1 2 4 6">Non-catalytic component of the exosome, which is a complex involved in RNA degradation. Increases the RNA binding and the efficiency of RNA degradation. Confers strong poly(A) specificity to the exosome.</text>
</comment>
<comment type="subunit">
    <text evidence="1 3 5 7 8">Component of the archaeal exosome complex. Forms a trimer of Rrp4 and/or Csl4 subunits. The trimer associates with a hexameric ring-like arrangement composed of 3 Rrp41-Rrp42 heterodimers.</text>
</comment>
<comment type="subcellular location">
    <subcellularLocation>
        <location evidence="1">Cytoplasm</location>
    </subcellularLocation>
</comment>
<comment type="domain">
    <text evidence="3 7">Contains an N-terminal domain that mediates interactions with the hexameric ring, a central S1 domain and a C-terminal KH domain. The KH domain is required for efficient RNA degradation, but is not responsible for poly(A) preference.</text>
</comment>
<comment type="similarity">
    <text evidence="1">Belongs to the RRP4 family.</text>
</comment>
<protein>
    <recommendedName>
        <fullName evidence="1">Exosome complex component Rrp4</fullName>
    </recommendedName>
</protein>
<sequence>MNMSQSQKIVLQPRSIVVPGELLAEGEFQIPWSPYILKINSKYYSTVVGLFDVKDTQFEVIPLEGSFYYPKINDIVIGLVEDVEIYGWVVDIKAPYKAYLPASNLLGRSINVGEDLRRYLDVGDYVIARIENFDRSIDPVLSVKGKDLGRVSNGIVIDIMPVKVPRVIGKNKSMYETLTSKSGCSIFVANNGRIWATCPSRFSEEILIEAIRKIENESHIKGLTDRIKQFIEEKLGERNASSGETKTNS</sequence>
<accession>Q9UXC4</accession>
<keyword id="KW-0002">3D-structure</keyword>
<keyword id="KW-0963">Cytoplasm</keyword>
<keyword id="KW-0271">Exosome</keyword>
<keyword id="KW-1185">Reference proteome</keyword>
<keyword id="KW-0694">RNA-binding</keyword>
<reference key="1">
    <citation type="journal article" date="2000" name="Genome">
        <title>Gene content and organization of a 281-kbp contig from the genome of the extremely thermophilic archaeon, Sulfolobus solfataricus P2.</title>
        <authorList>
            <person name="Charlebois R.L."/>
            <person name="Singh R.K."/>
            <person name="Chan-Weiher C.C.-Y."/>
            <person name="Allard G."/>
            <person name="Chow C."/>
            <person name="Confalonieri F."/>
            <person name="Curtis B."/>
            <person name="Duguet M."/>
            <person name="Erauso G."/>
            <person name="Faguy D."/>
            <person name="Gaasterland T."/>
            <person name="Garrett R.A."/>
            <person name="Gordon P."/>
            <person name="Jeffries A.C."/>
            <person name="Kozera C."/>
            <person name="Kushwaha N."/>
            <person name="Lafleur E."/>
            <person name="Medina N."/>
            <person name="Peng X."/>
            <person name="Penny S.L."/>
            <person name="She Q."/>
            <person name="St Jean A."/>
            <person name="van der Oost J."/>
            <person name="Young F."/>
            <person name="Zivanovic Y."/>
            <person name="Doolittle W.F."/>
            <person name="Ragan M.A."/>
            <person name="Sensen C.W."/>
        </authorList>
    </citation>
    <scope>NUCLEOTIDE SEQUENCE [LARGE SCALE GENOMIC DNA]</scope>
    <source>
        <strain>ATCC 35092 / DSM 1617 / JCM 11322 / P2</strain>
    </source>
</reference>
<reference key="2">
    <citation type="journal article" date="2001" name="Proc. Natl. Acad. Sci. U.S.A.">
        <title>The complete genome of the crenarchaeon Sulfolobus solfataricus P2.</title>
        <authorList>
            <person name="She Q."/>
            <person name="Singh R.K."/>
            <person name="Confalonieri F."/>
            <person name="Zivanovic Y."/>
            <person name="Allard G."/>
            <person name="Awayez M.J."/>
            <person name="Chan-Weiher C.C.-Y."/>
            <person name="Clausen I.G."/>
            <person name="Curtis B.A."/>
            <person name="De Moors A."/>
            <person name="Erauso G."/>
            <person name="Fletcher C."/>
            <person name="Gordon P.M.K."/>
            <person name="Heikamp-de Jong I."/>
            <person name="Jeffries A.C."/>
            <person name="Kozera C.J."/>
            <person name="Medina N."/>
            <person name="Peng X."/>
            <person name="Thi-Ngoc H.P."/>
            <person name="Redder P."/>
            <person name="Schenk M.E."/>
            <person name="Theriault C."/>
            <person name="Tolstrup N."/>
            <person name="Charlebois R.L."/>
            <person name="Doolittle W.F."/>
            <person name="Duguet M."/>
            <person name="Gaasterland T."/>
            <person name="Garrett R.A."/>
            <person name="Ragan M.A."/>
            <person name="Sensen C.W."/>
            <person name="Van der Oost J."/>
        </authorList>
    </citation>
    <scope>NUCLEOTIDE SEQUENCE [LARGE SCALE GENOMIC DNA]</scope>
    <source>
        <strain>ATCC 35092 / DSM 1617 / JCM 11322 / P2</strain>
    </source>
</reference>
<reference key="3">
    <citation type="journal article" date="2003" name="EMBO Rep.">
        <title>An exosome-like complex in Sulfolobus solfataricus.</title>
        <authorList>
            <person name="Evguenieva-Hackenberg E."/>
            <person name="Walter P."/>
            <person name="Hochleitner E."/>
            <person name="Lottspeich F."/>
            <person name="Klug G."/>
        </authorList>
    </citation>
    <scope>INTERACTION WITH EXOSOME</scope>
    <source>
        <strain>ATCC 35092 / DSM 1617 / JCM 11322 / P2</strain>
    </source>
</reference>
<reference key="4">
    <citation type="journal article" date="2006" name="Mol. Microbiol.">
        <title>Characterization of native and reconstituted exosome complexes from the hyperthermophilic archaeon Sulfolobus solfataricus.</title>
        <authorList>
            <person name="Walter P."/>
            <person name="Klein F."/>
            <person name="Lorentzen E."/>
            <person name="Ilchmann A."/>
            <person name="Klug G."/>
            <person name="Evguenieva-Hackenberg E."/>
        </authorList>
    </citation>
    <scope>FUNCTION</scope>
    <scope>INTERACTION WITH EXOSOME</scope>
</reference>
<reference key="5">
    <citation type="journal article" date="2008" name="Biochemistry">
        <title>Rrp4 and Csl4 are needed for efficient degradation but not for polyadenylation of synthetic and natural RNA by the archaeal exosome.</title>
        <authorList>
            <person name="Evguenieva-Hackenberg E."/>
            <person name="Roppelt V."/>
            <person name="Finsterseifer P."/>
            <person name="Klug G."/>
        </authorList>
    </citation>
    <scope>FUNCTION</scope>
    <source>
        <strain>ATCC 35092 / DSM 1617 / JCM 11322 / P2</strain>
    </source>
</reference>
<reference key="6">
    <citation type="journal article" date="2010" name="FEBS Lett.">
        <title>The evolutionarily conserved subunits Rrp4 and Csl4 confer different substrate specificities to the archaeal exosome.</title>
        <authorList>
            <person name="Roppelt V."/>
            <person name="Klug G."/>
            <person name="Evguenieva-Hackenberg E."/>
        </authorList>
    </citation>
    <scope>FUNCTION</scope>
</reference>
<reference key="7">
    <citation type="journal article" date="2012" name="Biochimie">
        <title>Heterogeneous complexes of the RNA exosome in Sulfolobus solfataricus.</title>
        <authorList>
            <person name="Witharana C."/>
            <person name="Roppelt V."/>
            <person name="Lochnit G."/>
            <person name="Klug G."/>
            <person name="Evguenieva-Hackenberg E."/>
        </authorList>
    </citation>
    <scope>SUBUNIT</scope>
    <scope>DOMAIN</scope>
    <source>
        <strain>ATCC 35092 / DSM 1617 / JCM 11322 / P2</strain>
    </source>
</reference>
<reference key="8">
    <citation type="journal article" date="2007" name="EMBO Rep.">
        <title>RNA channelling by the archaeal exosome.</title>
        <authorList>
            <person name="Lorentzen E."/>
            <person name="Dziembowski A."/>
            <person name="Lindner D."/>
            <person name="Seraphin B."/>
            <person name="Conti E."/>
        </authorList>
    </citation>
    <scope>X-RAY CRYSTALLOGRAPHY (1.60 ANGSTROMS) IN COMPLEX WITH RRP41 AND RRP42</scope>
    <scope>SUBUNIT</scope>
    <scope>DOMAIN</scope>
</reference>
<reference key="9">
    <citation type="journal article" date="2010" name="PLoS ONE">
        <title>Crystal structure of the S. solfataricus archaeal exosome reveals conformational flexibility in the RNA-binding ring.</title>
        <authorList>
            <person name="Lu C."/>
            <person name="Ding F."/>
            <person name="Ke A."/>
        </authorList>
    </citation>
    <scope>X-RAY CRYSTALLOGRAPHY (2.41 ANGSTROMS) IN COMPLEX WITH RRP41 AND RRP42</scope>
    <scope>SUBUNIT</scope>
</reference>
<reference key="10">
    <citation type="journal article" date="2012" name="Archaea">
        <title>Crystal structure of a 9-subunit archaeal exosome in pre-catalytic states of the phosphorolytic reaction.</title>
        <authorList>
            <person name="Lorentzen E."/>
            <person name="Conti E."/>
        </authorList>
    </citation>
    <scope>X-RAY CRYSTALLOGRAPHY (1.80 ANGSTROMS) IN COMPLEX WITH RRP41 AND RRP42</scope>
</reference>
<proteinExistence type="evidence at protein level"/>